<reference key="1">
    <citation type="submission" date="2002-12" db="EMBL/GenBank/DDBJ databases">
        <title>Complete genome sequence of Vibrio vulnificus CMCP6.</title>
        <authorList>
            <person name="Rhee J.H."/>
            <person name="Kim S.Y."/>
            <person name="Chung S.S."/>
            <person name="Kim J.J."/>
            <person name="Moon Y.H."/>
            <person name="Jeong H."/>
            <person name="Choy H.E."/>
        </authorList>
    </citation>
    <scope>NUCLEOTIDE SEQUENCE [LARGE SCALE GENOMIC DNA]</scope>
    <source>
        <strain>CMCP6</strain>
    </source>
</reference>
<organism>
    <name type="scientific">Vibrio vulnificus (strain CMCP6)</name>
    <dbReference type="NCBI Taxonomy" id="216895"/>
    <lineage>
        <taxon>Bacteria</taxon>
        <taxon>Pseudomonadati</taxon>
        <taxon>Pseudomonadota</taxon>
        <taxon>Gammaproteobacteria</taxon>
        <taxon>Vibrionales</taxon>
        <taxon>Vibrionaceae</taxon>
        <taxon>Vibrio</taxon>
    </lineage>
</organism>
<protein>
    <recommendedName>
        <fullName evidence="2">Ribosomal large subunit pseudouridine synthase D</fullName>
        <ecNumber evidence="2">5.4.99.23</ecNumber>
    </recommendedName>
    <alternativeName>
        <fullName>23S rRNA pseudouridine(1911/1915/1917) synthase</fullName>
    </alternativeName>
    <alternativeName>
        <fullName>rRNA pseudouridylate synthase D</fullName>
    </alternativeName>
    <alternativeName>
        <fullName>rRNA-uridine isomerase D</fullName>
    </alternativeName>
</protein>
<sequence length="325" mass="36457">MAQQIELTNTVKDSQLGQRLDQAIAELFADFSRSRLKEWLLDGKVTVDGNVVTKPRTKVMGGEVITVLAELEDEVRWEAQDIPLDIVYEDDDILVINKPRDFVVHPGAGTPDGTVLNALLFHCPEVAEVPRAGIVHRLDKDTTGLMVVAKTVPAQTRLVRALQKRNITREYEAIAIGRMTAGGKVDKPIGRHATKRTLMAVSPMGKPAVTHFRVAEHFREHTRIRLRLETGRTHQIRVHMSYLQHPLLGDAAYGGRARIPAGASEDVTAMIRNFDRQALHAVMLRFEHPITGEEMEFHAPVPDDMVELTETLRRDAQEHGLPDEY</sequence>
<dbReference type="EC" id="5.4.99.23" evidence="2"/>
<dbReference type="EMBL" id="AE016795">
    <property type="protein sequence ID" value="AAO09003.1"/>
    <property type="molecule type" value="Genomic_DNA"/>
</dbReference>
<dbReference type="RefSeq" id="WP_011078573.1">
    <property type="nucleotide sequence ID" value="NC_004459.3"/>
</dbReference>
<dbReference type="SMR" id="Q8DEV0"/>
<dbReference type="KEGG" id="vvu:VV1_0484"/>
<dbReference type="HOGENOM" id="CLU_016902_4_0_6"/>
<dbReference type="Proteomes" id="UP000002275">
    <property type="component" value="Chromosome 1"/>
</dbReference>
<dbReference type="GO" id="GO:0005737">
    <property type="term" value="C:cytoplasm"/>
    <property type="evidence" value="ECO:0007669"/>
    <property type="project" value="UniProtKB-SubCell"/>
</dbReference>
<dbReference type="GO" id="GO:0160140">
    <property type="term" value="F:23S rRNA pseudouridine(1911/1915/1917) synthase activity"/>
    <property type="evidence" value="ECO:0007669"/>
    <property type="project" value="UniProtKB-EC"/>
</dbReference>
<dbReference type="GO" id="GO:0003723">
    <property type="term" value="F:RNA binding"/>
    <property type="evidence" value="ECO:0007669"/>
    <property type="project" value="UniProtKB-KW"/>
</dbReference>
<dbReference type="GO" id="GO:0000455">
    <property type="term" value="P:enzyme-directed rRNA pseudouridine synthesis"/>
    <property type="evidence" value="ECO:0007669"/>
    <property type="project" value="TreeGrafter"/>
</dbReference>
<dbReference type="CDD" id="cd02869">
    <property type="entry name" value="PseudoU_synth_RluA_like"/>
    <property type="match status" value="1"/>
</dbReference>
<dbReference type="CDD" id="cd00165">
    <property type="entry name" value="S4"/>
    <property type="match status" value="1"/>
</dbReference>
<dbReference type="FunFam" id="3.10.290.10:FF:000011">
    <property type="entry name" value="Pseudouridine synthase"/>
    <property type="match status" value="1"/>
</dbReference>
<dbReference type="FunFam" id="3.30.2350.10:FF:000006">
    <property type="entry name" value="Pseudouridine synthase"/>
    <property type="match status" value="1"/>
</dbReference>
<dbReference type="Gene3D" id="3.30.2350.10">
    <property type="entry name" value="Pseudouridine synthase"/>
    <property type="match status" value="1"/>
</dbReference>
<dbReference type="Gene3D" id="3.10.290.10">
    <property type="entry name" value="RNA-binding S4 domain"/>
    <property type="match status" value="1"/>
</dbReference>
<dbReference type="InterPro" id="IPR020103">
    <property type="entry name" value="PsdUridine_synth_cat_dom_sf"/>
</dbReference>
<dbReference type="InterPro" id="IPR006224">
    <property type="entry name" value="PsdUridine_synth_RluA-like_CS"/>
</dbReference>
<dbReference type="InterPro" id="IPR006225">
    <property type="entry name" value="PsdUridine_synth_RluC/D"/>
</dbReference>
<dbReference type="InterPro" id="IPR006145">
    <property type="entry name" value="PsdUridine_synth_RsuA/RluA"/>
</dbReference>
<dbReference type="InterPro" id="IPR050188">
    <property type="entry name" value="RluA_PseudoU_synthase"/>
</dbReference>
<dbReference type="InterPro" id="IPR002942">
    <property type="entry name" value="S4_RNA-bd"/>
</dbReference>
<dbReference type="InterPro" id="IPR036986">
    <property type="entry name" value="S4_RNA-bd_sf"/>
</dbReference>
<dbReference type="NCBIfam" id="NF008385">
    <property type="entry name" value="PRK11180.1"/>
    <property type="match status" value="1"/>
</dbReference>
<dbReference type="NCBIfam" id="TIGR00005">
    <property type="entry name" value="rluA_subfam"/>
    <property type="match status" value="1"/>
</dbReference>
<dbReference type="PANTHER" id="PTHR21600">
    <property type="entry name" value="MITOCHONDRIAL RNA PSEUDOURIDINE SYNTHASE"/>
    <property type="match status" value="1"/>
</dbReference>
<dbReference type="PANTHER" id="PTHR21600:SF44">
    <property type="entry name" value="RIBOSOMAL LARGE SUBUNIT PSEUDOURIDINE SYNTHASE D"/>
    <property type="match status" value="1"/>
</dbReference>
<dbReference type="Pfam" id="PF00849">
    <property type="entry name" value="PseudoU_synth_2"/>
    <property type="match status" value="1"/>
</dbReference>
<dbReference type="Pfam" id="PF01479">
    <property type="entry name" value="S4"/>
    <property type="match status" value="1"/>
</dbReference>
<dbReference type="SMART" id="SM00363">
    <property type="entry name" value="S4"/>
    <property type="match status" value="1"/>
</dbReference>
<dbReference type="SUPFAM" id="SSF55174">
    <property type="entry name" value="Alpha-L RNA-binding motif"/>
    <property type="match status" value="1"/>
</dbReference>
<dbReference type="SUPFAM" id="SSF55120">
    <property type="entry name" value="Pseudouridine synthase"/>
    <property type="match status" value="1"/>
</dbReference>
<dbReference type="PROSITE" id="PS01129">
    <property type="entry name" value="PSI_RLU"/>
    <property type="match status" value="1"/>
</dbReference>
<dbReference type="PROSITE" id="PS50889">
    <property type="entry name" value="S4"/>
    <property type="match status" value="1"/>
</dbReference>
<keyword id="KW-0963">Cytoplasm</keyword>
<keyword id="KW-0413">Isomerase</keyword>
<keyword id="KW-0694">RNA-binding</keyword>
<keyword id="KW-0698">rRNA processing</keyword>
<feature type="chain" id="PRO_0000162704" description="Ribosomal large subunit pseudouridine synthase D">
    <location>
        <begin position="1"/>
        <end position="325"/>
    </location>
</feature>
<feature type="domain" description="S4 RNA-binding" evidence="3">
    <location>
        <begin position="18"/>
        <end position="91"/>
    </location>
</feature>
<feature type="active site" evidence="1">
    <location>
        <position position="139"/>
    </location>
</feature>
<comment type="function">
    <text evidence="2">Responsible for synthesis of pseudouridine from uracil at positions 1911, 1915 and 1917 in 23S ribosomal RNA.</text>
</comment>
<comment type="catalytic activity">
    <reaction evidence="2">
        <text>uridine(1911/1915/1917) in 23S rRNA = pseudouridine(1911/1915/1917) in 23S rRNA</text>
        <dbReference type="Rhea" id="RHEA:42524"/>
        <dbReference type="Rhea" id="RHEA-COMP:10097"/>
        <dbReference type="Rhea" id="RHEA-COMP:10098"/>
        <dbReference type="ChEBI" id="CHEBI:65314"/>
        <dbReference type="ChEBI" id="CHEBI:65315"/>
        <dbReference type="EC" id="5.4.99.23"/>
    </reaction>
</comment>
<comment type="subcellular location">
    <subcellularLocation>
        <location evidence="2">Cytoplasm</location>
    </subcellularLocation>
    <text evidence="2">Associates with late stage pre-50S ribosomal subunits.</text>
</comment>
<comment type="similarity">
    <text evidence="4">Belongs to the pseudouridine synthase RluA family.</text>
</comment>
<name>RLUD_VIBVU</name>
<evidence type="ECO:0000250" key="1"/>
<evidence type="ECO:0000250" key="2">
    <source>
        <dbReference type="UniProtKB" id="P33643"/>
    </source>
</evidence>
<evidence type="ECO:0000255" key="3">
    <source>
        <dbReference type="PROSITE-ProRule" id="PRU00182"/>
    </source>
</evidence>
<evidence type="ECO:0000305" key="4"/>
<accession>Q8DEV0</accession>
<gene>
    <name type="primary">rluD</name>
    <name type="ordered locus">VV1_0484</name>
</gene>
<proteinExistence type="inferred from homology"/>